<proteinExistence type="inferred from homology"/>
<keyword id="KW-0997">Cell inner membrane</keyword>
<keyword id="KW-1003">Cell membrane</keyword>
<keyword id="KW-0472">Membrane</keyword>
<keyword id="KW-1185">Reference proteome</keyword>
<comment type="function">
    <text evidence="1">Could be involved in insertion of integral membrane proteins into the membrane.</text>
</comment>
<comment type="subcellular location">
    <subcellularLocation>
        <location evidence="1">Cell inner membrane</location>
        <topology evidence="1">Peripheral membrane protein</topology>
        <orientation evidence="1">Cytoplasmic side</orientation>
    </subcellularLocation>
</comment>
<comment type="similarity">
    <text evidence="1">Belongs to the UPF0161 family.</text>
</comment>
<comment type="sequence caution" evidence="2">
    <conflict type="erroneous initiation">
        <sequence resource="EMBL-CDS" id="ABC46005"/>
    </conflict>
</comment>
<organism>
    <name type="scientific">Salinibacter ruber (strain DSM 13855 / M31)</name>
    <dbReference type="NCBI Taxonomy" id="309807"/>
    <lineage>
        <taxon>Bacteria</taxon>
        <taxon>Pseudomonadati</taxon>
        <taxon>Rhodothermota</taxon>
        <taxon>Rhodothermia</taxon>
        <taxon>Rhodothermales</taxon>
        <taxon>Salinibacteraceae</taxon>
        <taxon>Salinibacter</taxon>
    </lineage>
</organism>
<accession>Q2S3T2</accession>
<reference key="1">
    <citation type="journal article" date="2005" name="Proc. Natl. Acad. Sci. U.S.A.">
        <title>The genome of Salinibacter ruber: convergence and gene exchange among hyperhalophilic bacteria and archaea.</title>
        <authorList>
            <person name="Mongodin E.F."/>
            <person name="Nelson K.E."/>
            <person name="Daugherty S."/>
            <person name="DeBoy R.T."/>
            <person name="Wister J."/>
            <person name="Khouri H."/>
            <person name="Weidman J."/>
            <person name="Walsh D.A."/>
            <person name="Papke R.T."/>
            <person name="Sanchez Perez G."/>
            <person name="Sharma A.K."/>
            <person name="Nesbo C.L."/>
            <person name="MacLeod D."/>
            <person name="Bapteste E."/>
            <person name="Doolittle W.F."/>
            <person name="Charlebois R.L."/>
            <person name="Legault B."/>
            <person name="Rodriguez-Valera F."/>
        </authorList>
    </citation>
    <scope>NUCLEOTIDE SEQUENCE [LARGE SCALE GENOMIC DNA]</scope>
    <source>
        <strain>DSM 13855 / CECT 5946 / M31</strain>
    </source>
</reference>
<sequence>MRRALSLLARLPRLLLIGLVRLYQLVLSPHLGRTCRFHPTCSAYAIQAFREYGALKGLVLTVHRLLRCHPWGGHGYDPPRWFDEEHPAADGRPQAAEEQ</sequence>
<gene>
    <name type="ordered locus">SRU_1017</name>
</gene>
<name>YIDD_SALRD</name>
<dbReference type="EMBL" id="CP000159">
    <property type="protein sequence ID" value="ABC46005.1"/>
    <property type="status" value="ALT_INIT"/>
    <property type="molecule type" value="Genomic_DNA"/>
</dbReference>
<dbReference type="RefSeq" id="WP_112905182.1">
    <property type="nucleotide sequence ID" value="NC_007677.1"/>
</dbReference>
<dbReference type="RefSeq" id="YP_445149.1">
    <property type="nucleotide sequence ID" value="NC_007677.1"/>
</dbReference>
<dbReference type="STRING" id="309807.SRU_1017"/>
<dbReference type="EnsemblBacteria" id="ABC46005">
    <property type="protein sequence ID" value="ABC46005"/>
    <property type="gene ID" value="SRU_1017"/>
</dbReference>
<dbReference type="GeneID" id="83727945"/>
<dbReference type="KEGG" id="sru:SRU_1017"/>
<dbReference type="PATRIC" id="fig|309807.25.peg.1054"/>
<dbReference type="eggNOG" id="COG0759">
    <property type="taxonomic scope" value="Bacteria"/>
</dbReference>
<dbReference type="HOGENOM" id="CLU_144811_2_2_10"/>
<dbReference type="OrthoDB" id="9801753at2"/>
<dbReference type="Proteomes" id="UP000008674">
    <property type="component" value="Chromosome"/>
</dbReference>
<dbReference type="GO" id="GO:0005886">
    <property type="term" value="C:plasma membrane"/>
    <property type="evidence" value="ECO:0007669"/>
    <property type="project" value="UniProtKB-SubCell"/>
</dbReference>
<dbReference type="HAMAP" id="MF_00386">
    <property type="entry name" value="UPF0161_YidD"/>
    <property type="match status" value="1"/>
</dbReference>
<dbReference type="InterPro" id="IPR002696">
    <property type="entry name" value="Membr_insert_effic_factor_YidD"/>
</dbReference>
<dbReference type="NCBIfam" id="TIGR00278">
    <property type="entry name" value="membrane protein insertion efficiency factor YidD"/>
    <property type="match status" value="1"/>
</dbReference>
<dbReference type="PANTHER" id="PTHR33383">
    <property type="entry name" value="MEMBRANE PROTEIN INSERTION EFFICIENCY FACTOR-RELATED"/>
    <property type="match status" value="1"/>
</dbReference>
<dbReference type="PANTHER" id="PTHR33383:SF1">
    <property type="entry name" value="MEMBRANE PROTEIN INSERTION EFFICIENCY FACTOR-RELATED"/>
    <property type="match status" value="1"/>
</dbReference>
<dbReference type="Pfam" id="PF01809">
    <property type="entry name" value="YidD"/>
    <property type="match status" value="1"/>
</dbReference>
<dbReference type="SMART" id="SM01234">
    <property type="entry name" value="Haemolytic"/>
    <property type="match status" value="1"/>
</dbReference>
<feature type="chain" id="PRO_0000253164" description="Putative membrane protein insertion efficiency factor">
    <location>
        <begin position="1"/>
        <end position="99"/>
    </location>
</feature>
<protein>
    <recommendedName>
        <fullName evidence="1">Putative membrane protein insertion efficiency factor</fullName>
    </recommendedName>
</protein>
<evidence type="ECO:0000255" key="1">
    <source>
        <dbReference type="HAMAP-Rule" id="MF_00386"/>
    </source>
</evidence>
<evidence type="ECO:0000305" key="2"/>